<accession>Q7VKZ9</accession>
<proteinExistence type="inferred from homology"/>
<gene>
    <name evidence="1" type="primary">lptD</name>
    <name type="synonym">imp</name>
    <name type="synonym">ostA</name>
    <name type="ordered locus">HD_1704</name>
</gene>
<name>LPTD_HAEDU</name>
<keyword id="KW-0998">Cell outer membrane</keyword>
<keyword id="KW-0472">Membrane</keyword>
<keyword id="KW-1185">Reference proteome</keyword>
<keyword id="KW-0732">Signal</keyword>
<evidence type="ECO:0000255" key="1">
    <source>
        <dbReference type="HAMAP-Rule" id="MF_01411"/>
    </source>
</evidence>
<reference key="1">
    <citation type="submission" date="2003-06" db="EMBL/GenBank/DDBJ databases">
        <title>The complete genome sequence of Haemophilus ducreyi.</title>
        <authorList>
            <person name="Munson R.S. Jr."/>
            <person name="Ray W.C."/>
            <person name="Mahairas G."/>
            <person name="Sabo P."/>
            <person name="Mungur R."/>
            <person name="Johnson L."/>
            <person name="Nguyen D."/>
            <person name="Wang J."/>
            <person name="Forst C."/>
            <person name="Hood L."/>
        </authorList>
    </citation>
    <scope>NUCLEOTIDE SEQUENCE [LARGE SCALE GENOMIC DNA]</scope>
    <source>
        <strain>35000HP / ATCC 700724</strain>
    </source>
</reference>
<sequence>MKIRYSVLSTFIISALYSQDTQANLKHQCLLRVPHFAGEEITADQLNMPIEIEADRAVINQPKEANYSGNVTIKQGNRSIFADNVRIEQQAPQHRKAFLIGRYQYQDNLIQAEGHNALLDLQSKDAEVANTTYQLVGRQGRGEAESGQFTPQTRRLKNASFTACLLNDNAWSIEANEMVQHIKAGYAEMWHARFKIFDVPIFYSPYLQFPLGDQRRSGILTPKLYHSTKDGLIYSQPFYWNIAPNMDATFTSNYYSRRGWQINPEFRYLTALGQGILAGEYLANDRLDTYRPKDMNDRRYLFHWRHNMSFLTDWHLDVDYTNVSDRRYFSDFDSSYGNVTDGYALQHFKLGYYQPQYNLSISGKDFHTFDSFDNVKPYRVLPQIDFNYYQDQFLKDSRFSFFAQIARFENDSKSMPNAWRFHAEPIINIPFVNHYGSLNFETKLYASHYQQQKGENQTAEEVKKQLTRIIPQVKLDFQTVLEADKSLFSGFKQILEPRLQYVYRPYRDQSEIGSKSHESVGLGYDSALLQTDYYSLFNDRRYSGLDRISSANLITAGASTRFFNKKTGEEVFNISVGQTYYLRPSRVDSLAIDSTADRSSSWSVESNWRFQPKWNWHASYQYDTRLHKSSLANMSLQYKPSTENVFQLNYRYVNEDYINQNLSFNRYGQDIKQIGGMIGWNLTDKVAIMASHYRDIALKKAVETQLSLNYNTCCWSANLYVARQLTTTPIGAKDSIRNFYYDNKFGINFELRFGHDYSSGMHKMLSKGILPYVEQYGIN</sequence>
<feature type="signal peptide" evidence="1">
    <location>
        <begin position="1"/>
        <end position="23"/>
    </location>
</feature>
<feature type="chain" id="PRO_0000020280" description="LPS-assembly protein LptD">
    <location>
        <begin position="24"/>
        <end position="779"/>
    </location>
</feature>
<organism>
    <name type="scientific">Haemophilus ducreyi (strain 35000HP / ATCC 700724)</name>
    <dbReference type="NCBI Taxonomy" id="233412"/>
    <lineage>
        <taxon>Bacteria</taxon>
        <taxon>Pseudomonadati</taxon>
        <taxon>Pseudomonadota</taxon>
        <taxon>Gammaproteobacteria</taxon>
        <taxon>Pasteurellales</taxon>
        <taxon>Pasteurellaceae</taxon>
        <taxon>Haemophilus</taxon>
    </lineage>
</organism>
<protein>
    <recommendedName>
        <fullName evidence="1">LPS-assembly protein LptD</fullName>
    </recommendedName>
</protein>
<comment type="function">
    <text evidence="1">Together with LptE, is involved in the assembly of lipopolysaccharide (LPS) at the surface of the outer membrane.</text>
</comment>
<comment type="subunit">
    <text evidence="1">Component of the lipopolysaccharide transport and assembly complex. Interacts with LptE and LptA.</text>
</comment>
<comment type="subcellular location">
    <subcellularLocation>
        <location evidence="1">Cell outer membrane</location>
    </subcellularLocation>
</comment>
<comment type="similarity">
    <text evidence="1">Belongs to the LptD family.</text>
</comment>
<dbReference type="EMBL" id="AE017143">
    <property type="protein sequence ID" value="AAP96464.1"/>
    <property type="molecule type" value="Genomic_DNA"/>
</dbReference>
<dbReference type="RefSeq" id="WP_010945493.1">
    <property type="nucleotide sequence ID" value="NC_002940.2"/>
</dbReference>
<dbReference type="SMR" id="Q7VKZ9"/>
<dbReference type="STRING" id="233412.HD_1704"/>
<dbReference type="KEGG" id="hdu:HD_1704"/>
<dbReference type="eggNOG" id="COG1452">
    <property type="taxonomic scope" value="Bacteria"/>
</dbReference>
<dbReference type="HOGENOM" id="CLU_009039_2_0_6"/>
<dbReference type="OrthoDB" id="9760225at2"/>
<dbReference type="Proteomes" id="UP000001022">
    <property type="component" value="Chromosome"/>
</dbReference>
<dbReference type="GO" id="GO:0009279">
    <property type="term" value="C:cell outer membrane"/>
    <property type="evidence" value="ECO:0007669"/>
    <property type="project" value="UniProtKB-SubCell"/>
</dbReference>
<dbReference type="GO" id="GO:1990351">
    <property type="term" value="C:transporter complex"/>
    <property type="evidence" value="ECO:0007669"/>
    <property type="project" value="TreeGrafter"/>
</dbReference>
<dbReference type="GO" id="GO:0043165">
    <property type="term" value="P:Gram-negative-bacterium-type cell outer membrane assembly"/>
    <property type="evidence" value="ECO:0007669"/>
    <property type="project" value="UniProtKB-UniRule"/>
</dbReference>
<dbReference type="GO" id="GO:0015920">
    <property type="term" value="P:lipopolysaccharide transport"/>
    <property type="evidence" value="ECO:0007669"/>
    <property type="project" value="InterPro"/>
</dbReference>
<dbReference type="Gene3D" id="2.60.450.10">
    <property type="entry name" value="Lipopolysaccharide (LPS) transport protein A like domain"/>
    <property type="match status" value="1"/>
</dbReference>
<dbReference type="HAMAP" id="MF_01411">
    <property type="entry name" value="LPS_assembly_LptD"/>
    <property type="match status" value="1"/>
</dbReference>
<dbReference type="InterPro" id="IPR020889">
    <property type="entry name" value="LipoPS_assembly_LptD"/>
</dbReference>
<dbReference type="InterPro" id="IPR050218">
    <property type="entry name" value="LptD"/>
</dbReference>
<dbReference type="InterPro" id="IPR007543">
    <property type="entry name" value="LptD_C"/>
</dbReference>
<dbReference type="InterPro" id="IPR005653">
    <property type="entry name" value="OstA-like_N"/>
</dbReference>
<dbReference type="NCBIfam" id="NF002997">
    <property type="entry name" value="PRK03761.1"/>
    <property type="match status" value="1"/>
</dbReference>
<dbReference type="PANTHER" id="PTHR30189">
    <property type="entry name" value="LPS-ASSEMBLY PROTEIN"/>
    <property type="match status" value="1"/>
</dbReference>
<dbReference type="PANTHER" id="PTHR30189:SF1">
    <property type="entry name" value="LPS-ASSEMBLY PROTEIN LPTD"/>
    <property type="match status" value="1"/>
</dbReference>
<dbReference type="Pfam" id="PF04453">
    <property type="entry name" value="LptD"/>
    <property type="match status" value="1"/>
</dbReference>
<dbReference type="Pfam" id="PF03968">
    <property type="entry name" value="LptD_N"/>
    <property type="match status" value="1"/>
</dbReference>